<proteinExistence type="inferred from homology"/>
<sequence>MSCCGGKCGCGAGCKCGSGCNGCGNYADITEQSSASETLVMGVVGTQKLNYGQAEAGVATEGSCSGCKCVYCTCDPCTCK</sequence>
<dbReference type="EMBL" id="U81041">
    <property type="protein sequence ID" value="AAB68034.1"/>
    <property type="molecule type" value="mRNA"/>
</dbReference>
<dbReference type="GO" id="GO:0046872">
    <property type="term" value="F:metal ion binding"/>
    <property type="evidence" value="ECO:0007669"/>
    <property type="project" value="UniProtKB-KW"/>
</dbReference>
<dbReference type="InterPro" id="IPR000347">
    <property type="entry name" value="Metalthion_15p"/>
</dbReference>
<dbReference type="PANTHER" id="PTHR33543">
    <property type="entry name" value="METALLOTHIONEIN-LIKE PROTEIN 2A"/>
    <property type="match status" value="1"/>
</dbReference>
<dbReference type="PANTHER" id="PTHR33543:SF33">
    <property type="entry name" value="METALLOTHIONEIN-LIKE PROTEIN 2B"/>
    <property type="match status" value="1"/>
</dbReference>
<dbReference type="Pfam" id="PF01439">
    <property type="entry name" value="Metallothio_2"/>
    <property type="match status" value="1"/>
</dbReference>
<reference key="1">
    <citation type="online journal article" date="1997" name="Plant Gene Register">
        <title>Isolation of a cDNA encoding a metallothionein-like protein from strawberry fruit.</title>
        <authorList>
            <person name="Aguilar M."/>
            <person name="Osuna D."/>
            <person name="Caballero J.L."/>
            <person name="Munoz J."/>
        </authorList>
        <locator>PGR97-023</locator>
    </citation>
    <scope>NUCLEOTIDE SEQUENCE [MRNA]</scope>
    <source>
        <strain>cv. Chandler</strain>
        <tissue>Fruit</tissue>
    </source>
</reference>
<protein>
    <recommendedName>
        <fullName>Metallothionein-like protein type 2 MET1</fullName>
    </recommendedName>
</protein>
<evidence type="ECO:0000305" key="1"/>
<organism>
    <name type="scientific">Fragaria ananassa</name>
    <name type="common">Strawberry</name>
    <name type="synonym">Fragaria chiloensis x Fragaria virginiana</name>
    <dbReference type="NCBI Taxonomy" id="3747"/>
    <lineage>
        <taxon>Eukaryota</taxon>
        <taxon>Viridiplantae</taxon>
        <taxon>Streptophyta</taxon>
        <taxon>Embryophyta</taxon>
        <taxon>Tracheophyta</taxon>
        <taxon>Spermatophyta</taxon>
        <taxon>Magnoliopsida</taxon>
        <taxon>eudicotyledons</taxon>
        <taxon>Gunneridae</taxon>
        <taxon>Pentapetalae</taxon>
        <taxon>rosids</taxon>
        <taxon>fabids</taxon>
        <taxon>Rosales</taxon>
        <taxon>Rosaceae</taxon>
        <taxon>Rosoideae</taxon>
        <taxon>Potentilleae</taxon>
        <taxon>Fragariinae</taxon>
        <taxon>Fragaria</taxon>
    </lineage>
</organism>
<feature type="chain" id="PRO_0000197397" description="Metallothionein-like protein type 2 MET1">
    <location>
        <begin position="1"/>
        <end position="80"/>
    </location>
</feature>
<accession>P93134</accession>
<name>MT2_FRAAN</name>
<comment type="function">
    <text>Metallothioneins have a high content of cysteine residues that bind various heavy metals.</text>
</comment>
<comment type="similarity">
    <text evidence="1">Belongs to the metallothionein superfamily. Type 15 family.</text>
</comment>
<gene>
    <name type="primary">MET1</name>
</gene>
<keyword id="KW-0479">Metal-binding</keyword>
<keyword id="KW-0480">Metal-thiolate cluster</keyword>